<gene>
    <name type="primary">PGM1</name>
</gene>
<dbReference type="EC" id="5.4.2.2" evidence="3"/>
<dbReference type="EMBL" id="BC123640">
    <property type="protein sequence ID" value="AAI23641.1"/>
    <property type="molecule type" value="mRNA"/>
</dbReference>
<dbReference type="RefSeq" id="NP_001070371.1">
    <property type="nucleotide sequence ID" value="NM_001076903.1"/>
</dbReference>
<dbReference type="SMR" id="Q08DP0"/>
<dbReference type="FunCoup" id="Q08DP0">
    <property type="interactions" value="1318"/>
</dbReference>
<dbReference type="STRING" id="9913.ENSBTAP00000025308"/>
<dbReference type="PaxDb" id="9913-ENSBTAP00000025308"/>
<dbReference type="PeptideAtlas" id="Q08DP0"/>
<dbReference type="GeneID" id="534402"/>
<dbReference type="KEGG" id="bta:534402"/>
<dbReference type="CTD" id="5236"/>
<dbReference type="eggNOG" id="KOG0625">
    <property type="taxonomic scope" value="Eukaryota"/>
</dbReference>
<dbReference type="HOGENOM" id="CLU_009330_0_1_1"/>
<dbReference type="InParanoid" id="Q08DP0"/>
<dbReference type="OrthoDB" id="2291at2759"/>
<dbReference type="Proteomes" id="UP000009136">
    <property type="component" value="Unplaced"/>
</dbReference>
<dbReference type="GO" id="GO:0005829">
    <property type="term" value="C:cytosol"/>
    <property type="evidence" value="ECO:0000318"/>
    <property type="project" value="GO_Central"/>
</dbReference>
<dbReference type="GO" id="GO:0000287">
    <property type="term" value="F:magnesium ion binding"/>
    <property type="evidence" value="ECO:0007669"/>
    <property type="project" value="InterPro"/>
</dbReference>
<dbReference type="GO" id="GO:0004614">
    <property type="term" value="F:phosphoglucomutase activity"/>
    <property type="evidence" value="ECO:0000250"/>
    <property type="project" value="AgBase"/>
</dbReference>
<dbReference type="GO" id="GO:0005975">
    <property type="term" value="P:carbohydrate metabolic process"/>
    <property type="evidence" value="ECO:0000318"/>
    <property type="project" value="GO_Central"/>
</dbReference>
<dbReference type="GO" id="GO:0006006">
    <property type="term" value="P:glucose metabolic process"/>
    <property type="evidence" value="ECO:0007669"/>
    <property type="project" value="UniProtKB-KW"/>
</dbReference>
<dbReference type="CDD" id="cd03085">
    <property type="entry name" value="PGM1"/>
    <property type="match status" value="1"/>
</dbReference>
<dbReference type="FunFam" id="3.30.310.50:FF:000002">
    <property type="entry name" value="Phosphoglucomutase 5"/>
    <property type="match status" value="1"/>
</dbReference>
<dbReference type="FunFam" id="3.40.120.10:FF:000004">
    <property type="entry name" value="Phosphoglucomutase 5"/>
    <property type="match status" value="1"/>
</dbReference>
<dbReference type="FunFam" id="3.40.120.10:FF:000005">
    <property type="entry name" value="Phosphoglucomutase 5"/>
    <property type="match status" value="1"/>
</dbReference>
<dbReference type="FunFam" id="3.40.120.10:FF:000007">
    <property type="entry name" value="Phosphoglucomutase 5"/>
    <property type="match status" value="1"/>
</dbReference>
<dbReference type="Gene3D" id="3.40.120.10">
    <property type="entry name" value="Alpha-D-Glucose-1,6-Bisphosphate, subunit A, domain 3"/>
    <property type="match status" value="3"/>
</dbReference>
<dbReference type="Gene3D" id="3.30.310.50">
    <property type="entry name" value="Alpha-D-phosphohexomutase, C-terminal domain"/>
    <property type="match status" value="1"/>
</dbReference>
<dbReference type="InterPro" id="IPR005844">
    <property type="entry name" value="A-D-PHexomutase_a/b/a-I"/>
</dbReference>
<dbReference type="InterPro" id="IPR016055">
    <property type="entry name" value="A-D-PHexomutase_a/b/a-I/II/III"/>
</dbReference>
<dbReference type="InterPro" id="IPR005845">
    <property type="entry name" value="A-D-PHexomutase_a/b/a-II"/>
</dbReference>
<dbReference type="InterPro" id="IPR005846">
    <property type="entry name" value="A-D-PHexomutase_a/b/a-III"/>
</dbReference>
<dbReference type="InterPro" id="IPR036900">
    <property type="entry name" value="A-D-PHexomutase_C_sf"/>
</dbReference>
<dbReference type="InterPro" id="IPR016066">
    <property type="entry name" value="A-D-PHexomutase_CS"/>
</dbReference>
<dbReference type="InterPro" id="IPR005841">
    <property type="entry name" value="Alpha-D-phosphohexomutase_SF"/>
</dbReference>
<dbReference type="InterPro" id="IPR045244">
    <property type="entry name" value="PGM"/>
</dbReference>
<dbReference type="NCBIfam" id="NF005737">
    <property type="entry name" value="PRK07564.1-1"/>
    <property type="match status" value="1"/>
</dbReference>
<dbReference type="PANTHER" id="PTHR22573:SF37">
    <property type="entry name" value="PHOSPHOGLUCOMUTASE-1"/>
    <property type="match status" value="1"/>
</dbReference>
<dbReference type="PANTHER" id="PTHR22573">
    <property type="entry name" value="PHOSPHOHEXOMUTASE FAMILY MEMBER"/>
    <property type="match status" value="1"/>
</dbReference>
<dbReference type="Pfam" id="PF24947">
    <property type="entry name" value="PGM1_C_vert_fung"/>
    <property type="match status" value="1"/>
</dbReference>
<dbReference type="Pfam" id="PF02878">
    <property type="entry name" value="PGM_PMM_I"/>
    <property type="match status" value="1"/>
</dbReference>
<dbReference type="Pfam" id="PF02879">
    <property type="entry name" value="PGM_PMM_II"/>
    <property type="match status" value="1"/>
</dbReference>
<dbReference type="Pfam" id="PF02880">
    <property type="entry name" value="PGM_PMM_III"/>
    <property type="match status" value="1"/>
</dbReference>
<dbReference type="PRINTS" id="PR00509">
    <property type="entry name" value="PGMPMM"/>
</dbReference>
<dbReference type="SUPFAM" id="SSF55957">
    <property type="entry name" value="Phosphoglucomutase, C-terminal domain"/>
    <property type="match status" value="1"/>
</dbReference>
<dbReference type="SUPFAM" id="SSF53738">
    <property type="entry name" value="Phosphoglucomutase, first 3 domains"/>
    <property type="match status" value="3"/>
</dbReference>
<dbReference type="PROSITE" id="PS00710">
    <property type="entry name" value="PGM_PMM"/>
    <property type="match status" value="1"/>
</dbReference>
<organism>
    <name type="scientific">Bos taurus</name>
    <name type="common">Bovine</name>
    <dbReference type="NCBI Taxonomy" id="9913"/>
    <lineage>
        <taxon>Eukaryota</taxon>
        <taxon>Metazoa</taxon>
        <taxon>Chordata</taxon>
        <taxon>Craniata</taxon>
        <taxon>Vertebrata</taxon>
        <taxon>Euteleostomi</taxon>
        <taxon>Mammalia</taxon>
        <taxon>Eutheria</taxon>
        <taxon>Laurasiatheria</taxon>
        <taxon>Artiodactyla</taxon>
        <taxon>Ruminantia</taxon>
        <taxon>Pecora</taxon>
        <taxon>Bovidae</taxon>
        <taxon>Bovinae</taxon>
        <taxon>Bos</taxon>
    </lineage>
</organism>
<proteinExistence type="evidence at transcript level"/>
<evidence type="ECO:0000250" key="1"/>
<evidence type="ECO:0000250" key="2">
    <source>
        <dbReference type="UniProtKB" id="P00949"/>
    </source>
</evidence>
<evidence type="ECO:0000250" key="3">
    <source>
        <dbReference type="UniProtKB" id="P36871"/>
    </source>
</evidence>
<evidence type="ECO:0000250" key="4">
    <source>
        <dbReference type="UniProtKB" id="P38652"/>
    </source>
</evidence>
<evidence type="ECO:0000250" key="5">
    <source>
        <dbReference type="UniProtKB" id="Q9D0F9"/>
    </source>
</evidence>
<evidence type="ECO:0000305" key="6"/>
<feature type="chain" id="PRO_0000343708" description="Phosphoglucomutase-1">
    <location>
        <begin position="1"/>
        <end position="562"/>
    </location>
</feature>
<feature type="active site" description="Phosphoserine intermediate" evidence="2">
    <location>
        <position position="117"/>
    </location>
</feature>
<feature type="binding site" evidence="2">
    <location>
        <position position="23"/>
    </location>
    <ligand>
        <name>alpha-D-glucose 1,6-bisphosphate</name>
        <dbReference type="ChEBI" id="CHEBI:58392"/>
    </ligand>
</feature>
<feature type="binding site" evidence="2">
    <location>
        <position position="117"/>
    </location>
    <ligand>
        <name>alpha-D-glucose 1,6-bisphosphate</name>
        <dbReference type="ChEBI" id="CHEBI:58392"/>
    </ligand>
</feature>
<feature type="binding site" description="via phosphate group" evidence="2">
    <location>
        <position position="117"/>
    </location>
    <ligand>
        <name>Mg(2+)</name>
        <dbReference type="ChEBI" id="CHEBI:18420"/>
    </ligand>
</feature>
<feature type="binding site" evidence="2">
    <location>
        <position position="288"/>
    </location>
    <ligand>
        <name>Mg(2+)</name>
        <dbReference type="ChEBI" id="CHEBI:18420"/>
    </ligand>
</feature>
<feature type="binding site" evidence="2">
    <location>
        <position position="290"/>
    </location>
    <ligand>
        <name>Mg(2+)</name>
        <dbReference type="ChEBI" id="CHEBI:18420"/>
    </ligand>
</feature>
<feature type="binding site" evidence="2">
    <location>
        <position position="292"/>
    </location>
    <ligand>
        <name>alpha-D-glucose 1,6-bisphosphate</name>
        <dbReference type="ChEBI" id="CHEBI:58392"/>
    </ligand>
</feature>
<feature type="binding site" evidence="2">
    <location>
        <position position="292"/>
    </location>
    <ligand>
        <name>Mg(2+)</name>
        <dbReference type="ChEBI" id="CHEBI:18420"/>
    </ligand>
</feature>
<feature type="binding site" evidence="2">
    <location>
        <position position="293"/>
    </location>
    <ligand>
        <name>alpha-D-glucose 1,6-bisphosphate</name>
        <dbReference type="ChEBI" id="CHEBI:58392"/>
    </ligand>
</feature>
<feature type="binding site" evidence="2">
    <location>
        <position position="357"/>
    </location>
    <ligand>
        <name>alpha-D-glucose 1,6-bisphosphate</name>
        <dbReference type="ChEBI" id="CHEBI:58392"/>
    </ligand>
</feature>
<feature type="binding site" evidence="2">
    <location>
        <position position="376"/>
    </location>
    <ligand>
        <name>alpha-D-glucose 1,6-bisphosphate</name>
        <dbReference type="ChEBI" id="CHEBI:58392"/>
    </ligand>
</feature>
<feature type="binding site" evidence="2">
    <location>
        <position position="378"/>
    </location>
    <ligand>
        <name>alpha-D-glucose 1,6-bisphosphate</name>
        <dbReference type="ChEBI" id="CHEBI:58392"/>
    </ligand>
</feature>
<feature type="binding site" evidence="2">
    <location>
        <position position="389"/>
    </location>
    <ligand>
        <name>alpha-D-glucose 1,6-bisphosphate</name>
        <dbReference type="ChEBI" id="CHEBI:58392"/>
    </ligand>
</feature>
<feature type="modified residue" description="N-acetylmethionine" evidence="3">
    <location>
        <position position="1"/>
    </location>
</feature>
<feature type="modified residue" description="N6-acetyllysine" evidence="3">
    <location>
        <position position="16"/>
    </location>
</feature>
<feature type="modified residue" description="Phosphothreonine" evidence="5">
    <location>
        <position position="115"/>
    </location>
</feature>
<feature type="modified residue" description="Phosphoserine" evidence="3">
    <location>
        <position position="117"/>
    </location>
</feature>
<feature type="modified residue" description="Phosphoserine" evidence="4">
    <location>
        <position position="134"/>
    </location>
</feature>
<feature type="modified residue" description="Phosphothreonine" evidence="3">
    <location>
        <position position="185"/>
    </location>
</feature>
<feature type="modified residue" description="Phosphoserine" evidence="4">
    <location>
        <position position="213"/>
    </location>
</feature>
<feature type="modified residue" description="N6-acetyllysine" evidence="5">
    <location>
        <position position="349"/>
    </location>
</feature>
<feature type="modified residue" description="Phosphotyrosine" evidence="5">
    <location>
        <position position="353"/>
    </location>
</feature>
<feature type="modified residue" description="Phosphoserine" evidence="4">
    <location>
        <position position="369"/>
    </location>
</feature>
<feature type="modified residue" description="Phosphoserine" evidence="3">
    <location>
        <position position="378"/>
    </location>
</feature>
<feature type="modified residue" description="N6-succinyllysine" evidence="5">
    <location>
        <position position="419"/>
    </location>
</feature>
<feature type="modified residue" description="Phosphothreonine; by PAK1" evidence="3">
    <location>
        <position position="467"/>
    </location>
</feature>
<feature type="modified residue" description="Phosphoserine" evidence="4">
    <location>
        <position position="477"/>
    </location>
</feature>
<feature type="modified residue" description="Phosphoserine" evidence="4">
    <location>
        <position position="485"/>
    </location>
</feature>
<feature type="modified residue" description="Phosphoserine" evidence="3">
    <location>
        <position position="505"/>
    </location>
</feature>
<feature type="modified residue" description="Phosphothreonine" evidence="5">
    <location>
        <position position="507"/>
    </location>
</feature>
<feature type="modified residue" description="Phosphoserine" evidence="3">
    <location>
        <position position="509"/>
    </location>
</feature>
<feature type="modified residue" description="Phosphoserine" evidence="4">
    <location>
        <position position="541"/>
    </location>
</feature>
<reference key="1">
    <citation type="submission" date="2006-09" db="EMBL/GenBank/DDBJ databases">
        <authorList>
            <consortium name="NIH - Mammalian Gene Collection (MGC) project"/>
        </authorList>
    </citation>
    <scope>NUCLEOTIDE SEQUENCE [LARGE SCALE MRNA]</scope>
    <source>
        <strain>Hereford</strain>
        <tissue>Fetal muscle</tissue>
    </source>
</reference>
<name>PGM1_BOVIN</name>
<accession>Q08DP0</accession>
<comment type="function">
    <text evidence="3">Catalyzes the reversible isomerization of alpha-D-glucose 1-phosphate to alpha-D-glucose 6-phosphate (By similarity). The mechanism proceeds via the intermediate compound alpha-D-glucose 1,6-bisphosphate (By similarity). This enzyme participates in both the breakdown and synthesis of glucose (By similarity).</text>
</comment>
<comment type="catalytic activity">
    <reaction evidence="3">
        <text>alpha-D-glucose 1-phosphate = alpha-D-glucose 6-phosphate</text>
        <dbReference type="Rhea" id="RHEA:23536"/>
        <dbReference type="ChEBI" id="CHEBI:58225"/>
        <dbReference type="ChEBI" id="CHEBI:58601"/>
        <dbReference type="EC" id="5.4.2.2"/>
    </reaction>
</comment>
<comment type="catalytic activity">
    <reaction evidence="3">
        <text>O-phospho-L-seryl-[protein] + alpha-D-glucose 1-phosphate = alpha-D-glucose 1,6-bisphosphate + L-seryl-[protein]</text>
        <dbReference type="Rhea" id="RHEA:68748"/>
        <dbReference type="Rhea" id="RHEA-COMP:9863"/>
        <dbReference type="Rhea" id="RHEA-COMP:11604"/>
        <dbReference type="ChEBI" id="CHEBI:29999"/>
        <dbReference type="ChEBI" id="CHEBI:58392"/>
        <dbReference type="ChEBI" id="CHEBI:58601"/>
        <dbReference type="ChEBI" id="CHEBI:83421"/>
    </reaction>
</comment>
<comment type="catalytic activity">
    <reaction evidence="3">
        <text>alpha-D-glucose 1,6-bisphosphate + L-seryl-[protein] = O-phospho-L-seryl-[protein] + alpha-D-glucose 6-phosphate</text>
        <dbReference type="Rhea" id="RHEA:68752"/>
        <dbReference type="Rhea" id="RHEA-COMP:9863"/>
        <dbReference type="Rhea" id="RHEA-COMP:11604"/>
        <dbReference type="ChEBI" id="CHEBI:29999"/>
        <dbReference type="ChEBI" id="CHEBI:58225"/>
        <dbReference type="ChEBI" id="CHEBI:58392"/>
        <dbReference type="ChEBI" id="CHEBI:83421"/>
    </reaction>
</comment>
<comment type="cofactor">
    <cofactor evidence="2">
        <name>Mg(2+)</name>
        <dbReference type="ChEBI" id="CHEBI:18420"/>
    </cofactor>
    <text evidence="2">Binds 1 Mg(2+) ion per subunit.</text>
</comment>
<comment type="subunit">
    <text evidence="2">Monomer.</text>
</comment>
<comment type="subcellular location">
    <subcellularLocation>
        <location evidence="1">Cytoplasm</location>
    </subcellularLocation>
</comment>
<comment type="PTM">
    <text evidence="3">Phosphorylation at Thr-467 by PAK1 significantly enhances enzymatic activity.</text>
</comment>
<comment type="similarity">
    <text evidence="6">Belongs to the phosphohexose mutase family.</text>
</comment>
<sequence>MVKIVTVKTKAYQDQKPGTSGLRKRVKVFQSSSNYAENFIQSIISTVEPAQRQEATLVVGGDGRFYMKEAIQLIVRIAAANGIGRLVIGQNGILSTPAVSCIIRKIKAIGGIILTASHNPGGPNGDFGIKFNISNGGPAPEAITDKIFQISKTIEEYAICPDLHVDLGVLGKQQFDLENKFKPFTVEIVDSVEAYATMLRNIFDFNALKELLSGPNRLKIRIDAMHGVVGPYVKKILCEELGAPANSAVNCVPLEDFGGHHPDPNLTYAADLVETMKTGEHDFGAAFDGDGDRNMILGKHGFFVNPSDSVAVIAANIFSIPYFQQTGVRGFARSMPTSGALDRVANATKIALYETPTGWKFFGNLMDASKLSLCGEESFGTGSDHIREKDGLWAVLAWLSILATRKQSVEDILKDHWQKYGRNFFTRYDYEEVEAEGANKMMKELEALISDRSFVGKQFPVGDKVYTVEKIDNFEYSDPVDGSISRNQGLRLLFADGSRIIFRLSGTGSAGATIRLYIDSYEKDLAKIYQDPQVMLAPLISIALKVSQLQEKTGRTAPTVIT</sequence>
<protein>
    <recommendedName>
        <fullName>Phosphoglucomutase-1</fullName>
        <shortName>PGM 1</shortName>
        <ecNumber evidence="3">5.4.2.2</ecNumber>
    </recommendedName>
    <alternativeName>
        <fullName>Glucose phosphomutase 1</fullName>
    </alternativeName>
</protein>
<keyword id="KW-0007">Acetylation</keyword>
<keyword id="KW-0119">Carbohydrate metabolism</keyword>
<keyword id="KW-0963">Cytoplasm</keyword>
<keyword id="KW-0313">Glucose metabolism</keyword>
<keyword id="KW-0413">Isomerase</keyword>
<keyword id="KW-0460">Magnesium</keyword>
<keyword id="KW-0479">Metal-binding</keyword>
<keyword id="KW-0597">Phosphoprotein</keyword>
<keyword id="KW-1185">Reference proteome</keyword>